<dbReference type="EC" id="4.2.1.9" evidence="1"/>
<dbReference type="EMBL" id="AP009510">
    <property type="protein sequence ID" value="BAG14170.1"/>
    <property type="molecule type" value="Genomic_DNA"/>
</dbReference>
<dbReference type="RefSeq" id="WP_015423691.1">
    <property type="nucleotide sequence ID" value="NC_020419.1"/>
</dbReference>
<dbReference type="SMR" id="B1GYS7"/>
<dbReference type="STRING" id="471821.TGRD_687"/>
<dbReference type="KEGG" id="rsd:TGRD_687"/>
<dbReference type="PATRIC" id="fig|471821.5.peg.1173"/>
<dbReference type="HOGENOM" id="CLU_014271_4_2_0"/>
<dbReference type="UniPathway" id="UPA00047">
    <property type="reaction ID" value="UER00057"/>
</dbReference>
<dbReference type="UniPathway" id="UPA00049">
    <property type="reaction ID" value="UER00061"/>
</dbReference>
<dbReference type="Proteomes" id="UP000001691">
    <property type="component" value="Chromosome"/>
</dbReference>
<dbReference type="GO" id="GO:0005829">
    <property type="term" value="C:cytosol"/>
    <property type="evidence" value="ECO:0007669"/>
    <property type="project" value="TreeGrafter"/>
</dbReference>
<dbReference type="GO" id="GO:0051537">
    <property type="term" value="F:2 iron, 2 sulfur cluster binding"/>
    <property type="evidence" value="ECO:0007669"/>
    <property type="project" value="UniProtKB-UniRule"/>
</dbReference>
<dbReference type="GO" id="GO:0004160">
    <property type="term" value="F:dihydroxy-acid dehydratase activity"/>
    <property type="evidence" value="ECO:0007669"/>
    <property type="project" value="UniProtKB-UniRule"/>
</dbReference>
<dbReference type="GO" id="GO:0000287">
    <property type="term" value="F:magnesium ion binding"/>
    <property type="evidence" value="ECO:0007669"/>
    <property type="project" value="UniProtKB-UniRule"/>
</dbReference>
<dbReference type="GO" id="GO:0009097">
    <property type="term" value="P:isoleucine biosynthetic process"/>
    <property type="evidence" value="ECO:0007669"/>
    <property type="project" value="UniProtKB-UniRule"/>
</dbReference>
<dbReference type="GO" id="GO:0009099">
    <property type="term" value="P:L-valine biosynthetic process"/>
    <property type="evidence" value="ECO:0007669"/>
    <property type="project" value="UniProtKB-UniRule"/>
</dbReference>
<dbReference type="FunFam" id="3.50.30.80:FF:000001">
    <property type="entry name" value="Dihydroxy-acid dehydratase"/>
    <property type="match status" value="1"/>
</dbReference>
<dbReference type="Gene3D" id="3.50.30.80">
    <property type="entry name" value="IlvD/EDD C-terminal domain-like"/>
    <property type="match status" value="1"/>
</dbReference>
<dbReference type="HAMAP" id="MF_00012">
    <property type="entry name" value="IlvD"/>
    <property type="match status" value="1"/>
</dbReference>
<dbReference type="InterPro" id="IPR042096">
    <property type="entry name" value="Dihydro-acid_dehy_C"/>
</dbReference>
<dbReference type="InterPro" id="IPR004404">
    <property type="entry name" value="DihydroxyA_deHydtase"/>
</dbReference>
<dbReference type="InterPro" id="IPR020558">
    <property type="entry name" value="DiOHA_6PGluconate_deHydtase_CS"/>
</dbReference>
<dbReference type="InterPro" id="IPR056740">
    <property type="entry name" value="ILV_EDD_C"/>
</dbReference>
<dbReference type="InterPro" id="IPR000581">
    <property type="entry name" value="ILV_EDD_N"/>
</dbReference>
<dbReference type="InterPro" id="IPR037237">
    <property type="entry name" value="IlvD/EDD_N"/>
</dbReference>
<dbReference type="NCBIfam" id="TIGR00110">
    <property type="entry name" value="ilvD"/>
    <property type="match status" value="1"/>
</dbReference>
<dbReference type="NCBIfam" id="NF002068">
    <property type="entry name" value="PRK00911.1"/>
    <property type="match status" value="1"/>
</dbReference>
<dbReference type="PANTHER" id="PTHR43661">
    <property type="entry name" value="D-XYLONATE DEHYDRATASE"/>
    <property type="match status" value="1"/>
</dbReference>
<dbReference type="PANTHER" id="PTHR43661:SF3">
    <property type="entry name" value="D-XYLONATE DEHYDRATASE YAGF-RELATED"/>
    <property type="match status" value="1"/>
</dbReference>
<dbReference type="Pfam" id="PF24877">
    <property type="entry name" value="ILV_EDD_C"/>
    <property type="match status" value="1"/>
</dbReference>
<dbReference type="Pfam" id="PF00920">
    <property type="entry name" value="ILVD_EDD_N"/>
    <property type="match status" value="1"/>
</dbReference>
<dbReference type="SUPFAM" id="SSF143975">
    <property type="entry name" value="IlvD/EDD N-terminal domain-like"/>
    <property type="match status" value="1"/>
</dbReference>
<dbReference type="SUPFAM" id="SSF52016">
    <property type="entry name" value="LeuD/IlvD-like"/>
    <property type="match status" value="1"/>
</dbReference>
<dbReference type="PROSITE" id="PS00886">
    <property type="entry name" value="ILVD_EDD_1"/>
    <property type="match status" value="1"/>
</dbReference>
<dbReference type="PROSITE" id="PS00887">
    <property type="entry name" value="ILVD_EDD_2"/>
    <property type="match status" value="1"/>
</dbReference>
<sequence>MRSDQIKRGAVRAPNRCLLYSTGISPGDLDKPFIGIASSFTDLVPGHVAMRDLERYVERGIAAGGGVPFIFGAPAVCDGIAMGHSGMHYSLGSREIIADLVETVANAHMLDGLILLSNCDKVTPGMLMAAARLNIPAIVVTAGAMMTGMYDKKRRSMVRDTFEAVGQFQAGKITEKQLSELEMAACPGAGACQGMYTANTMACLTETMGMSMRGCATTLAVSAKKKRIAYESGIRVVALVKKDVKPRDILTLAAFKNAIVADMALGGSTNTVLHLPAIANEAGIELPLELFDEISKKTPQIACLEPAGDHYMEDLDNAGGIPAVLFAIQKNLAHSKTVSGFDIIEIANSAEILDEYVIRAKNPYKPEGGIAILRGNIAPRGCVVKQAAVSEKMKVFSGRARVFNSEDNAMKAILDNKIVPGDIVVIRYEGPAGGPGMREMLSPTSALHGMGLSDSVALLTDGRFSGGTRGPCIGHISPEAAADGAIVAINEGDTININIPERTLNVELTDDEIKARIGKVIKPEPKIKTGYMARYAKLVQSADTGAVLK</sequence>
<proteinExistence type="inferred from homology"/>
<name>ILVD_ENDTX</name>
<gene>
    <name evidence="1" type="primary">ilvD</name>
    <name type="ordered locus">TGRD_687</name>
</gene>
<feature type="chain" id="PRO_1000089426" description="Dihydroxy-acid dehydratase">
    <location>
        <begin position="1"/>
        <end position="549"/>
    </location>
</feature>
<feature type="active site" description="Proton acceptor" evidence="1">
    <location>
        <position position="465"/>
    </location>
</feature>
<feature type="binding site" evidence="1">
    <location>
        <position position="78"/>
    </location>
    <ligand>
        <name>Mg(2+)</name>
        <dbReference type="ChEBI" id="CHEBI:18420"/>
    </ligand>
</feature>
<feature type="binding site" evidence="1">
    <location>
        <position position="119"/>
    </location>
    <ligand>
        <name>[2Fe-2S] cluster</name>
        <dbReference type="ChEBI" id="CHEBI:190135"/>
    </ligand>
</feature>
<feature type="binding site" evidence="1">
    <location>
        <position position="120"/>
    </location>
    <ligand>
        <name>Mg(2+)</name>
        <dbReference type="ChEBI" id="CHEBI:18420"/>
    </ligand>
</feature>
<feature type="binding site" description="via carbamate group" evidence="1">
    <location>
        <position position="121"/>
    </location>
    <ligand>
        <name>Mg(2+)</name>
        <dbReference type="ChEBI" id="CHEBI:18420"/>
    </ligand>
</feature>
<feature type="binding site" evidence="1">
    <location>
        <position position="192"/>
    </location>
    <ligand>
        <name>[2Fe-2S] cluster</name>
        <dbReference type="ChEBI" id="CHEBI:190135"/>
    </ligand>
</feature>
<feature type="binding site" evidence="1">
    <location>
        <position position="439"/>
    </location>
    <ligand>
        <name>Mg(2+)</name>
        <dbReference type="ChEBI" id="CHEBI:18420"/>
    </ligand>
</feature>
<feature type="modified residue" description="N6-carboxylysine" evidence="1">
    <location>
        <position position="121"/>
    </location>
</feature>
<keyword id="KW-0001">2Fe-2S</keyword>
<keyword id="KW-0028">Amino-acid biosynthesis</keyword>
<keyword id="KW-0100">Branched-chain amino acid biosynthesis</keyword>
<keyword id="KW-0408">Iron</keyword>
<keyword id="KW-0411">Iron-sulfur</keyword>
<keyword id="KW-0456">Lyase</keyword>
<keyword id="KW-0460">Magnesium</keyword>
<keyword id="KW-0479">Metal-binding</keyword>
<organism>
    <name type="scientific">Endomicrobium trichonymphae</name>
    <dbReference type="NCBI Taxonomy" id="1408204"/>
    <lineage>
        <taxon>Bacteria</taxon>
        <taxon>Pseudomonadati</taxon>
        <taxon>Elusimicrobiota</taxon>
        <taxon>Endomicrobiia</taxon>
        <taxon>Endomicrobiales</taxon>
        <taxon>Endomicrobiaceae</taxon>
        <taxon>Candidatus Endomicrobiellum</taxon>
    </lineage>
</organism>
<evidence type="ECO:0000255" key="1">
    <source>
        <dbReference type="HAMAP-Rule" id="MF_00012"/>
    </source>
</evidence>
<comment type="function">
    <text evidence="1">Functions in the biosynthesis of branched-chain amino acids. Catalyzes the dehydration of (2R,3R)-2,3-dihydroxy-3-methylpentanoate (2,3-dihydroxy-3-methylvalerate) into 2-oxo-3-methylpentanoate (2-oxo-3-methylvalerate) and of (2R)-2,3-dihydroxy-3-methylbutanoate (2,3-dihydroxyisovalerate) into 2-oxo-3-methylbutanoate (2-oxoisovalerate), the penultimate precursor to L-isoleucine and L-valine, respectively.</text>
</comment>
<comment type="catalytic activity">
    <reaction evidence="1">
        <text>(2R)-2,3-dihydroxy-3-methylbutanoate = 3-methyl-2-oxobutanoate + H2O</text>
        <dbReference type="Rhea" id="RHEA:24809"/>
        <dbReference type="ChEBI" id="CHEBI:11851"/>
        <dbReference type="ChEBI" id="CHEBI:15377"/>
        <dbReference type="ChEBI" id="CHEBI:49072"/>
        <dbReference type="EC" id="4.2.1.9"/>
    </reaction>
    <physiologicalReaction direction="left-to-right" evidence="1">
        <dbReference type="Rhea" id="RHEA:24810"/>
    </physiologicalReaction>
</comment>
<comment type="catalytic activity">
    <reaction evidence="1">
        <text>(2R,3R)-2,3-dihydroxy-3-methylpentanoate = (S)-3-methyl-2-oxopentanoate + H2O</text>
        <dbReference type="Rhea" id="RHEA:27694"/>
        <dbReference type="ChEBI" id="CHEBI:15377"/>
        <dbReference type="ChEBI" id="CHEBI:35146"/>
        <dbReference type="ChEBI" id="CHEBI:49258"/>
        <dbReference type="EC" id="4.2.1.9"/>
    </reaction>
    <physiologicalReaction direction="left-to-right" evidence="1">
        <dbReference type="Rhea" id="RHEA:27695"/>
    </physiologicalReaction>
</comment>
<comment type="cofactor">
    <cofactor evidence="1">
        <name>[2Fe-2S] cluster</name>
        <dbReference type="ChEBI" id="CHEBI:190135"/>
    </cofactor>
    <text evidence="1">Binds 1 [2Fe-2S] cluster per subunit. This cluster acts as a Lewis acid cofactor.</text>
</comment>
<comment type="cofactor">
    <cofactor evidence="1">
        <name>Mg(2+)</name>
        <dbReference type="ChEBI" id="CHEBI:18420"/>
    </cofactor>
</comment>
<comment type="pathway">
    <text evidence="1">Amino-acid biosynthesis; L-isoleucine biosynthesis; L-isoleucine from 2-oxobutanoate: step 3/4.</text>
</comment>
<comment type="pathway">
    <text evidence="1">Amino-acid biosynthesis; L-valine biosynthesis; L-valine from pyruvate: step 3/4.</text>
</comment>
<comment type="subunit">
    <text evidence="1">Homodimer.</text>
</comment>
<comment type="similarity">
    <text evidence="1">Belongs to the IlvD/Edd family.</text>
</comment>
<protein>
    <recommendedName>
        <fullName evidence="1">Dihydroxy-acid dehydratase</fullName>
        <shortName evidence="1">DAD</shortName>
        <ecNumber evidence="1">4.2.1.9</ecNumber>
    </recommendedName>
</protein>
<accession>B1GYS7</accession>
<reference key="1">
    <citation type="journal article" date="2008" name="Proc. Natl. Acad. Sci. U.S.A.">
        <title>Complete genome of the uncultured termite group 1 bacteria in a single host protist cell.</title>
        <authorList>
            <person name="Hongoh Y."/>
            <person name="Sharma V.K."/>
            <person name="Prakash T."/>
            <person name="Noda S."/>
            <person name="Taylor T.D."/>
            <person name="Kudo T."/>
            <person name="Sakaki Y."/>
            <person name="Toyoda A."/>
            <person name="Hattori M."/>
            <person name="Ohkuma M."/>
        </authorList>
    </citation>
    <scope>NUCLEOTIDE SEQUENCE [LARGE SCALE GENOMIC DNA]</scope>
</reference>